<feature type="chain" id="PRO_1000130396" description="UPF0225 protein YPTS_2164">
    <location>
        <begin position="1"/>
        <end position="154"/>
    </location>
</feature>
<proteinExistence type="inferred from homology"/>
<dbReference type="EMBL" id="CP001048">
    <property type="protein sequence ID" value="ACC89125.1"/>
    <property type="molecule type" value="Genomic_DNA"/>
</dbReference>
<dbReference type="RefSeq" id="WP_002210666.1">
    <property type="nucleotide sequence ID" value="NZ_CP009780.1"/>
</dbReference>
<dbReference type="SMR" id="B2K3S9"/>
<dbReference type="KEGG" id="ypb:YPTS_2164"/>
<dbReference type="PATRIC" id="fig|502801.10.peg.1551"/>
<dbReference type="Gene3D" id="3.10.450.50">
    <property type="match status" value="1"/>
</dbReference>
<dbReference type="HAMAP" id="MF_00612">
    <property type="entry name" value="UPF0225"/>
    <property type="match status" value="1"/>
</dbReference>
<dbReference type="InterPro" id="IPR032710">
    <property type="entry name" value="NTF2-like_dom_sf"/>
</dbReference>
<dbReference type="InterPro" id="IPR004027">
    <property type="entry name" value="SEC_C_motif"/>
</dbReference>
<dbReference type="InterPro" id="IPR023006">
    <property type="entry name" value="UPF0225"/>
</dbReference>
<dbReference type="InterPro" id="IPR048469">
    <property type="entry name" value="YchJ-like_M"/>
</dbReference>
<dbReference type="NCBIfam" id="NF002449">
    <property type="entry name" value="PRK01617.1"/>
    <property type="match status" value="1"/>
</dbReference>
<dbReference type="NCBIfam" id="NF002486">
    <property type="entry name" value="PRK01752.1"/>
    <property type="match status" value="1"/>
</dbReference>
<dbReference type="PANTHER" id="PTHR33747:SF1">
    <property type="entry name" value="ADENYLATE CYCLASE-ASSOCIATED CAP C-TERMINAL DOMAIN-CONTAINING PROTEIN"/>
    <property type="match status" value="1"/>
</dbReference>
<dbReference type="PANTHER" id="PTHR33747">
    <property type="entry name" value="UPF0225 PROTEIN SCO1677"/>
    <property type="match status" value="1"/>
</dbReference>
<dbReference type="Pfam" id="PF02810">
    <property type="entry name" value="SEC-C"/>
    <property type="match status" value="2"/>
</dbReference>
<dbReference type="Pfam" id="PF17775">
    <property type="entry name" value="YchJ_M-like"/>
    <property type="match status" value="1"/>
</dbReference>
<dbReference type="SUPFAM" id="SSF54427">
    <property type="entry name" value="NTF2-like"/>
    <property type="match status" value="1"/>
</dbReference>
<dbReference type="SUPFAM" id="SSF103642">
    <property type="entry name" value="Sec-C motif"/>
    <property type="match status" value="1"/>
</dbReference>
<reference key="1">
    <citation type="submission" date="2008-04" db="EMBL/GenBank/DDBJ databases">
        <title>Complete sequence of Yersinia pseudotuberculosis PB1/+.</title>
        <authorList>
            <person name="Copeland A."/>
            <person name="Lucas S."/>
            <person name="Lapidus A."/>
            <person name="Glavina del Rio T."/>
            <person name="Dalin E."/>
            <person name="Tice H."/>
            <person name="Bruce D."/>
            <person name="Goodwin L."/>
            <person name="Pitluck S."/>
            <person name="Munk A.C."/>
            <person name="Brettin T."/>
            <person name="Detter J.C."/>
            <person name="Han C."/>
            <person name="Tapia R."/>
            <person name="Schmutz J."/>
            <person name="Larimer F."/>
            <person name="Land M."/>
            <person name="Hauser L."/>
            <person name="Challacombe J.F."/>
            <person name="Green L."/>
            <person name="Lindler L.E."/>
            <person name="Nikolich M.P."/>
            <person name="Richardson P."/>
        </authorList>
    </citation>
    <scope>NUCLEOTIDE SEQUENCE [LARGE SCALE GENOMIC DNA]</scope>
    <source>
        <strain>PB1/+</strain>
    </source>
</reference>
<organism>
    <name type="scientific">Yersinia pseudotuberculosis serotype IB (strain PB1/+)</name>
    <dbReference type="NCBI Taxonomy" id="502801"/>
    <lineage>
        <taxon>Bacteria</taxon>
        <taxon>Pseudomonadati</taxon>
        <taxon>Pseudomonadota</taxon>
        <taxon>Gammaproteobacteria</taxon>
        <taxon>Enterobacterales</taxon>
        <taxon>Yersiniaceae</taxon>
        <taxon>Yersinia</taxon>
    </lineage>
</organism>
<sequence length="154" mass="17623">MSELCPCGSILNYHECCGPYILGTQVAAKPAILMRSRYCAYVEKNVDYLIATWHPDCHAQEWRESIIQGFTKTVWHGLTVIAETPGRHPDEAFVEFIARFTDADNAQITAMHERSRFLRIKEHWYYIDGIRPSLGRNDTCLCGSGKKHKKCCGR</sequence>
<protein>
    <recommendedName>
        <fullName evidence="1">UPF0225 protein YPTS_2164</fullName>
    </recommendedName>
</protein>
<name>Y2164_YERPB</name>
<evidence type="ECO:0000255" key="1">
    <source>
        <dbReference type="HAMAP-Rule" id="MF_00612"/>
    </source>
</evidence>
<gene>
    <name type="ordered locus">YPTS_2164</name>
</gene>
<comment type="similarity">
    <text evidence="1">Belongs to the UPF0225 family.</text>
</comment>
<accession>B2K3S9</accession>